<reference key="1">
    <citation type="journal article" date="1990" name="J. Bacteriol.">
        <title>DNA sequence analysis of pglA and mechanism of export of its polygalacturonase product from Pseudomonas solanacearum.</title>
        <authorList>
            <person name="Huang J."/>
            <person name="Schell M.A."/>
        </authorList>
    </citation>
    <scope>NUCLEOTIDE SEQUENCE [GENOMIC DNA]</scope>
    <scope>PROTEIN SEQUENCE OF 22-39</scope>
    <source>
        <strain>AW</strain>
    </source>
</reference>
<gene>
    <name type="primary">pglA</name>
</gene>
<sequence length="529" mass="54636">MNHRYTLLALAAAALSAGAHATGTSVTAPWGEVAEPSLPADSAVCKTLSASITPIKGSVDSVDGNPANSQPDASRIQSAIDNCPAGQAVKLVKGSAGESGFLSGSLKLKSGVTLWIDTGVTLFASRNPADYDNGLGTCGTATTSNDKSCNALIVARDTAGSGIVGAGAIDGRGGSLVTSGPNANRLTWWDIAYLNKTKGLNQQNPRLIQTYNGSAFTLYGVTVQNSPNFHIVTTGTSGVTAWGIKIVTPSLAYAVAGYKCPSGSTPDKVTPATCFTPETVKNTDGFDPGQSTNVVLAYSYINTGDDHVAVKASSGPTRNLLFAHNHFYYGHGLSIGSETNTGVSNMLVTDLTMDGNDSSAGNGLRIKSDASRGGKVTNIVYDGICMRNVKEPLVFDPFYSSVKGSLYPNFTNIVVKNFHDLGSAKSIKRTMTFLGYKANKQKNPLTITLDNVVFDGTLPAFEGSHYGGPASPNGVHFTFGGTGPVSFADAIVTSSTTDVTVTGTPGTAAAVDCSKAFVPLKSVAPTSPI</sequence>
<comment type="function">
    <text>Contributes to the wilt disease production on tomato.</text>
</comment>
<comment type="catalytic activity">
    <reaction>
        <text>(1,4-alpha-D-galacturonosyl)n+m + H2O = (1,4-alpha-D-galacturonosyl)n + (1,4-alpha-D-galacturonosyl)m.</text>
        <dbReference type="EC" id="3.2.1.15"/>
    </reaction>
</comment>
<comment type="subunit">
    <text>Monomer.</text>
</comment>
<comment type="subcellular location">
    <subcellularLocation>
        <location>Secreted</location>
    </subcellularLocation>
</comment>
<comment type="similarity">
    <text evidence="3">Belongs to the glycosyl hydrolase 28 family.</text>
</comment>
<organism>
    <name type="scientific">Ralstonia solanacearum</name>
    <name type="common">Pseudomonas solanacearum</name>
    <dbReference type="NCBI Taxonomy" id="305"/>
    <lineage>
        <taxon>Bacteria</taxon>
        <taxon>Pseudomonadati</taxon>
        <taxon>Pseudomonadota</taxon>
        <taxon>Betaproteobacteria</taxon>
        <taxon>Burkholderiales</taxon>
        <taxon>Burkholderiaceae</taxon>
        <taxon>Ralstonia</taxon>
        <taxon>Ralstonia solanacearum species complex</taxon>
    </lineage>
</organism>
<name>PGLR_RALSL</name>
<protein>
    <recommendedName>
        <fullName>Polygalacturonase</fullName>
        <shortName>PGA</shortName>
        <ecNumber>3.2.1.15</ecNumber>
    </recommendedName>
    <alternativeName>
        <fullName>Pectinase</fullName>
    </alternativeName>
</protein>
<keyword id="KW-0961">Cell wall biogenesis/degradation</keyword>
<keyword id="KW-0903">Direct protein sequencing</keyword>
<keyword id="KW-0326">Glycosidase</keyword>
<keyword id="KW-0378">Hydrolase</keyword>
<keyword id="KW-0964">Secreted</keyword>
<keyword id="KW-0732">Signal</keyword>
<proteinExistence type="evidence at protein level"/>
<dbReference type="EC" id="3.2.1.15"/>
<dbReference type="EMBL" id="M33692">
    <property type="protein sequence ID" value="AAA25931.1"/>
    <property type="molecule type" value="Genomic_DNA"/>
</dbReference>
<dbReference type="PIR" id="A44508">
    <property type="entry name" value="A44508"/>
</dbReference>
<dbReference type="SMR" id="P20041"/>
<dbReference type="CAZy" id="GH28">
    <property type="family name" value="Glycoside Hydrolase Family 28"/>
</dbReference>
<dbReference type="GO" id="GO:0005576">
    <property type="term" value="C:extracellular region"/>
    <property type="evidence" value="ECO:0007669"/>
    <property type="project" value="UniProtKB-SubCell"/>
</dbReference>
<dbReference type="GO" id="GO:0004650">
    <property type="term" value="F:polygalacturonase activity"/>
    <property type="evidence" value="ECO:0007669"/>
    <property type="project" value="UniProtKB-EC"/>
</dbReference>
<dbReference type="GO" id="GO:0005975">
    <property type="term" value="P:carbohydrate metabolic process"/>
    <property type="evidence" value="ECO:0007669"/>
    <property type="project" value="InterPro"/>
</dbReference>
<dbReference type="GO" id="GO:0071555">
    <property type="term" value="P:cell wall organization"/>
    <property type="evidence" value="ECO:0007669"/>
    <property type="project" value="UniProtKB-KW"/>
</dbReference>
<dbReference type="Gene3D" id="2.160.20.10">
    <property type="entry name" value="Single-stranded right-handed beta-helix, Pectin lyase-like"/>
    <property type="match status" value="1"/>
</dbReference>
<dbReference type="InterPro" id="IPR051801">
    <property type="entry name" value="GH28_Enzymes"/>
</dbReference>
<dbReference type="InterPro" id="IPR000743">
    <property type="entry name" value="Glyco_hydro_28"/>
</dbReference>
<dbReference type="InterPro" id="IPR012334">
    <property type="entry name" value="Pectin_lyas_fold"/>
</dbReference>
<dbReference type="InterPro" id="IPR011050">
    <property type="entry name" value="Pectin_lyase_fold/virulence"/>
</dbReference>
<dbReference type="PANTHER" id="PTHR31339">
    <property type="entry name" value="PECTIN LYASE-RELATED"/>
    <property type="match status" value="1"/>
</dbReference>
<dbReference type="PANTHER" id="PTHR31339:SF9">
    <property type="entry name" value="PLASMIN AND FIBRONECTIN-BINDING PROTEIN A"/>
    <property type="match status" value="1"/>
</dbReference>
<dbReference type="Pfam" id="PF00295">
    <property type="entry name" value="Glyco_hydro_28"/>
    <property type="match status" value="1"/>
</dbReference>
<dbReference type="SUPFAM" id="SSF51126">
    <property type="entry name" value="Pectin lyase-like"/>
    <property type="match status" value="1"/>
</dbReference>
<dbReference type="PROSITE" id="PS00502">
    <property type="entry name" value="POLYGALACTURONASE"/>
    <property type="match status" value="1"/>
</dbReference>
<accession>P20041</accession>
<feature type="signal peptide" evidence="2">
    <location>
        <begin position="1"/>
        <end position="21"/>
    </location>
</feature>
<feature type="chain" id="PRO_0000024761" description="Polygalacturonase">
    <location>
        <begin position="22"/>
        <end position="529"/>
    </location>
</feature>
<feature type="region of interest" description="Required for PGA export across the outer membrane and catalytic activity">
    <location>
        <begin position="516"/>
        <end position="529"/>
    </location>
</feature>
<feature type="active site" description="Proton donor" evidence="1">
    <location>
        <position position="305"/>
    </location>
</feature>
<feature type="active site" evidence="1">
    <location>
        <position position="331"/>
    </location>
</feature>
<evidence type="ECO:0000255" key="1">
    <source>
        <dbReference type="PROSITE-ProRule" id="PRU10052"/>
    </source>
</evidence>
<evidence type="ECO:0000269" key="2">
    <source>
    </source>
</evidence>
<evidence type="ECO:0000305" key="3"/>